<evidence type="ECO:0000250" key="1"/>
<evidence type="ECO:0000255" key="2"/>
<evidence type="ECO:0000256" key="3">
    <source>
        <dbReference type="SAM" id="MobiDB-lite"/>
    </source>
</evidence>
<evidence type="ECO:0000269" key="4">
    <source>
    </source>
</evidence>
<evidence type="ECO:0000269" key="5">
    <source>
    </source>
</evidence>
<evidence type="ECO:0000269" key="6">
    <source>
    </source>
</evidence>
<evidence type="ECO:0000269" key="7">
    <source>
    </source>
</evidence>
<evidence type="ECO:0000303" key="8">
    <source>
    </source>
</evidence>
<evidence type="ECO:0000305" key="9"/>
<organism>
    <name type="scientific">Homo sapiens</name>
    <name type="common">Human</name>
    <dbReference type="NCBI Taxonomy" id="9606"/>
    <lineage>
        <taxon>Eukaryota</taxon>
        <taxon>Metazoa</taxon>
        <taxon>Chordata</taxon>
        <taxon>Craniata</taxon>
        <taxon>Vertebrata</taxon>
        <taxon>Euteleostomi</taxon>
        <taxon>Mammalia</taxon>
        <taxon>Eutheria</taxon>
        <taxon>Euarchontoglires</taxon>
        <taxon>Primates</taxon>
        <taxon>Haplorrhini</taxon>
        <taxon>Catarrhini</taxon>
        <taxon>Hominidae</taxon>
        <taxon>Homo</taxon>
    </lineage>
</organism>
<reference key="1">
    <citation type="journal article" date="2007" name="BMC Genomics">
        <title>The full-ORF clone resource of the German cDNA consortium.</title>
        <authorList>
            <person name="Bechtel S."/>
            <person name="Rosenfelder H."/>
            <person name="Duda A."/>
            <person name="Schmidt C.P."/>
            <person name="Ernst U."/>
            <person name="Wellenreuther R."/>
            <person name="Mehrle A."/>
            <person name="Schuster C."/>
            <person name="Bahr A."/>
            <person name="Bloecker H."/>
            <person name="Heubner D."/>
            <person name="Hoerlein A."/>
            <person name="Michel G."/>
            <person name="Wedler H."/>
            <person name="Koehrer K."/>
            <person name="Ottenwaelder B."/>
            <person name="Poustka A."/>
            <person name="Wiemann S."/>
            <person name="Schupp I."/>
        </authorList>
    </citation>
    <scope>NUCLEOTIDE SEQUENCE [LARGE SCALE MRNA] (ISOFORM 1)</scope>
    <scope>VARIANT MET-320</scope>
    <source>
        <tissue>Spinal cord</tissue>
    </source>
</reference>
<reference key="2">
    <citation type="journal article" date="2005" name="Nature">
        <title>Generation and annotation of the DNA sequences of human chromosomes 2 and 4.</title>
        <authorList>
            <person name="Hillier L.W."/>
            <person name="Graves T.A."/>
            <person name="Fulton R.S."/>
            <person name="Fulton L.A."/>
            <person name="Pepin K.H."/>
            <person name="Minx P."/>
            <person name="Wagner-McPherson C."/>
            <person name="Layman D."/>
            <person name="Wylie K."/>
            <person name="Sekhon M."/>
            <person name="Becker M.C."/>
            <person name="Fewell G.A."/>
            <person name="Delehaunty K.D."/>
            <person name="Miner T.L."/>
            <person name="Nash W.E."/>
            <person name="Kremitzki C."/>
            <person name="Oddy L."/>
            <person name="Du H."/>
            <person name="Sun H."/>
            <person name="Bradshaw-Cordum H."/>
            <person name="Ali J."/>
            <person name="Carter J."/>
            <person name="Cordes M."/>
            <person name="Harris A."/>
            <person name="Isak A."/>
            <person name="van Brunt A."/>
            <person name="Nguyen C."/>
            <person name="Du F."/>
            <person name="Courtney L."/>
            <person name="Kalicki J."/>
            <person name="Ozersky P."/>
            <person name="Abbott S."/>
            <person name="Armstrong J."/>
            <person name="Belter E.A."/>
            <person name="Caruso L."/>
            <person name="Cedroni M."/>
            <person name="Cotton M."/>
            <person name="Davidson T."/>
            <person name="Desai A."/>
            <person name="Elliott G."/>
            <person name="Erb T."/>
            <person name="Fronick C."/>
            <person name="Gaige T."/>
            <person name="Haakenson W."/>
            <person name="Haglund K."/>
            <person name="Holmes A."/>
            <person name="Harkins R."/>
            <person name="Kim K."/>
            <person name="Kruchowski S.S."/>
            <person name="Strong C.M."/>
            <person name="Grewal N."/>
            <person name="Goyea E."/>
            <person name="Hou S."/>
            <person name="Levy A."/>
            <person name="Martinka S."/>
            <person name="Mead K."/>
            <person name="McLellan M.D."/>
            <person name="Meyer R."/>
            <person name="Randall-Maher J."/>
            <person name="Tomlinson C."/>
            <person name="Dauphin-Kohlberg S."/>
            <person name="Kozlowicz-Reilly A."/>
            <person name="Shah N."/>
            <person name="Swearengen-Shahid S."/>
            <person name="Snider J."/>
            <person name="Strong J.T."/>
            <person name="Thompson J."/>
            <person name="Yoakum M."/>
            <person name="Leonard S."/>
            <person name="Pearman C."/>
            <person name="Trani L."/>
            <person name="Radionenko M."/>
            <person name="Waligorski J.E."/>
            <person name="Wang C."/>
            <person name="Rock S.M."/>
            <person name="Tin-Wollam A.-M."/>
            <person name="Maupin R."/>
            <person name="Latreille P."/>
            <person name="Wendl M.C."/>
            <person name="Yang S.-P."/>
            <person name="Pohl C."/>
            <person name="Wallis J.W."/>
            <person name="Spieth J."/>
            <person name="Bieri T.A."/>
            <person name="Berkowicz N."/>
            <person name="Nelson J.O."/>
            <person name="Osborne J."/>
            <person name="Ding L."/>
            <person name="Meyer R."/>
            <person name="Sabo A."/>
            <person name="Shotland Y."/>
            <person name="Sinha P."/>
            <person name="Wohldmann P.E."/>
            <person name="Cook L.L."/>
            <person name="Hickenbotham M.T."/>
            <person name="Eldred J."/>
            <person name="Williams D."/>
            <person name="Jones T.A."/>
            <person name="She X."/>
            <person name="Ciccarelli F.D."/>
            <person name="Izaurralde E."/>
            <person name="Taylor J."/>
            <person name="Schmutz J."/>
            <person name="Myers R.M."/>
            <person name="Cox D.R."/>
            <person name="Huang X."/>
            <person name="McPherson J.D."/>
            <person name="Mardis E.R."/>
            <person name="Clifton S.W."/>
            <person name="Warren W.C."/>
            <person name="Chinwalla A.T."/>
            <person name="Eddy S.R."/>
            <person name="Marra M.A."/>
            <person name="Ovcharenko I."/>
            <person name="Furey T.S."/>
            <person name="Miller W."/>
            <person name="Eichler E.E."/>
            <person name="Bork P."/>
            <person name="Suyama M."/>
            <person name="Torrents D."/>
            <person name="Waterston R.H."/>
            <person name="Wilson R.K."/>
        </authorList>
    </citation>
    <scope>NUCLEOTIDE SEQUENCE [LARGE SCALE GENOMIC DNA]</scope>
</reference>
<reference key="3">
    <citation type="journal article" date="2004" name="Genome Res.">
        <title>The status, quality, and expansion of the NIH full-length cDNA project: the Mammalian Gene Collection (MGC).</title>
        <authorList>
            <consortium name="The MGC Project Team"/>
        </authorList>
    </citation>
    <scope>NUCLEOTIDE SEQUENCE [LARGE SCALE MRNA] (ISOFORM 1)</scope>
    <scope>VARIANTS PRO-243; VAL-446 AND SER-541</scope>
    <source>
        <tissue>Brain</tissue>
    </source>
</reference>
<reference key="4">
    <citation type="journal article" date="1999" name="DNA Res.">
        <title>Prediction of the coding sequences of unidentified human genes. XIII. The complete sequences of 100 new cDNA clones from brain which code for large proteins in vitro.</title>
        <authorList>
            <person name="Nagase T."/>
            <person name="Ishikawa K."/>
            <person name="Suyama M."/>
            <person name="Kikuno R."/>
            <person name="Hirosawa M."/>
            <person name="Miyajima N."/>
            <person name="Tanaka A."/>
            <person name="Kotani H."/>
            <person name="Nomura N."/>
            <person name="Ohara O."/>
        </authorList>
    </citation>
    <scope>NUCLEOTIDE SEQUENCE [LARGE SCALE MRNA] OF 3-1009 (ISOFORM 2)</scope>
    <scope>VARIANTS PRO-243; VAL-446 AND SER-541</scope>
    <source>
        <tissue>Brain</tissue>
    </source>
</reference>
<reference key="5">
    <citation type="submission" date="2005-08" db="EMBL/GenBank/DDBJ databases">
        <authorList>
            <person name="Ohara O."/>
            <person name="Nagase T."/>
            <person name="Kikuno R."/>
        </authorList>
    </citation>
    <scope>SEQUENCE REVISION</scope>
</reference>
<reference key="6">
    <citation type="journal article" date="2009" name="J. Proteome Res.">
        <title>Glycoproteomics analysis of human liver tissue by combination of multiple enzyme digestion and hydrazide chemistry.</title>
        <authorList>
            <person name="Chen R."/>
            <person name="Jiang X."/>
            <person name="Sun D."/>
            <person name="Han G."/>
            <person name="Wang F."/>
            <person name="Ye M."/>
            <person name="Wang L."/>
            <person name="Zou H."/>
        </authorList>
    </citation>
    <scope>GLYCOSYLATION [LARGE SCALE ANALYSIS] AT ASN-516</scope>
    <source>
        <tissue>Liver</tissue>
    </source>
</reference>
<proteinExistence type="evidence at protein level"/>
<keyword id="KW-0025">Alternative splicing</keyword>
<keyword id="KW-0325">Glycoprotein</keyword>
<keyword id="KW-0326">Glycosidase</keyword>
<keyword id="KW-0378">Hydrolase</keyword>
<keyword id="KW-0479">Metal-binding</keyword>
<keyword id="KW-1267">Proteomics identification</keyword>
<keyword id="KW-1185">Reference proteome</keyword>
<keyword id="KW-0964">Secreted</keyword>
<keyword id="KW-0732">Signal</keyword>
<keyword id="KW-0862">Zinc</keyword>
<dbReference type="EC" id="3.2.1.24"/>
<dbReference type="EMBL" id="AL833071">
    <property type="protein sequence ID" value="CAD89971.1"/>
    <property type="molecule type" value="mRNA"/>
</dbReference>
<dbReference type="EMBL" id="AC004480">
    <property type="status" value="NOT_ANNOTATED_CDS"/>
    <property type="molecule type" value="Genomic_DNA"/>
</dbReference>
<dbReference type="EMBL" id="BC033307">
    <property type="protein sequence ID" value="AAH33307.1"/>
    <property type="molecule type" value="mRNA"/>
</dbReference>
<dbReference type="EMBL" id="AB023152">
    <property type="protein sequence ID" value="BAA76779.2"/>
    <property type="molecule type" value="mRNA"/>
</dbReference>
<dbReference type="CCDS" id="CCDS33951.1">
    <molecule id="Q9Y2E5-1"/>
</dbReference>
<dbReference type="RefSeq" id="NP_001278967.1">
    <property type="nucleotide sequence ID" value="NM_001292038.1"/>
</dbReference>
<dbReference type="RefSeq" id="NP_056089.1">
    <molecule id="Q9Y2E5-1"/>
    <property type="nucleotide sequence ID" value="NM_015274.3"/>
</dbReference>
<dbReference type="SMR" id="Q9Y2E5"/>
<dbReference type="BioGRID" id="116912">
    <property type="interactions" value="119"/>
</dbReference>
<dbReference type="FunCoup" id="Q9Y2E5">
    <property type="interactions" value="230"/>
</dbReference>
<dbReference type="IntAct" id="Q9Y2E5">
    <property type="interactions" value="69"/>
</dbReference>
<dbReference type="MINT" id="Q9Y2E5"/>
<dbReference type="STRING" id="9606.ENSP00000285599"/>
<dbReference type="BindingDB" id="Q9Y2E5"/>
<dbReference type="ChEMBL" id="CHEMBL2682"/>
<dbReference type="CAZy" id="GH38">
    <property type="family name" value="Glycoside Hydrolase Family 38"/>
</dbReference>
<dbReference type="GlyConnect" id="1216">
    <property type="glycosylation" value="10 N-Linked glycans (3 sites)"/>
</dbReference>
<dbReference type="GlyCosmos" id="Q9Y2E5">
    <property type="glycosylation" value="13 sites, 11 glycans"/>
</dbReference>
<dbReference type="GlyGen" id="Q9Y2E5">
    <property type="glycosylation" value="16 sites, 26 N-linked glycans (7 sites), 2 O-linked glycans (2 sites)"/>
</dbReference>
<dbReference type="iPTMnet" id="Q9Y2E5"/>
<dbReference type="PhosphoSitePlus" id="Q9Y2E5"/>
<dbReference type="BioMuta" id="MAN2B2"/>
<dbReference type="DMDM" id="296439484"/>
<dbReference type="jPOST" id="Q9Y2E5"/>
<dbReference type="MassIVE" id="Q9Y2E5"/>
<dbReference type="PaxDb" id="9606-ENSP00000285599"/>
<dbReference type="PeptideAtlas" id="Q9Y2E5"/>
<dbReference type="ProteomicsDB" id="85747">
    <molecule id="Q9Y2E5-1"/>
</dbReference>
<dbReference type="ProteomicsDB" id="85748">
    <molecule id="Q9Y2E5-2"/>
</dbReference>
<dbReference type="Pumba" id="Q9Y2E5"/>
<dbReference type="Antibodypedia" id="22659">
    <property type="antibodies" value="80 antibodies from 20 providers"/>
</dbReference>
<dbReference type="DNASU" id="23324"/>
<dbReference type="Ensembl" id="ENST00000285599.8">
    <molecule id="Q9Y2E5-1"/>
    <property type="protein sequence ID" value="ENSP00000285599.3"/>
    <property type="gene ID" value="ENSG00000013288.9"/>
</dbReference>
<dbReference type="GeneID" id="23324"/>
<dbReference type="KEGG" id="hsa:23324"/>
<dbReference type="MANE-Select" id="ENST00000285599.8">
    <property type="protein sequence ID" value="ENSP00000285599.3"/>
    <property type="RefSeq nucleotide sequence ID" value="NM_015274.3"/>
    <property type="RefSeq protein sequence ID" value="NP_056089.1"/>
</dbReference>
<dbReference type="UCSC" id="uc003gjf.2">
    <molecule id="Q9Y2E5-1"/>
    <property type="organism name" value="human"/>
</dbReference>
<dbReference type="AGR" id="HGNC:29623"/>
<dbReference type="CTD" id="23324"/>
<dbReference type="DisGeNET" id="23324"/>
<dbReference type="GeneCards" id="MAN2B2"/>
<dbReference type="HGNC" id="HGNC:29623">
    <property type="gene designation" value="MAN2B2"/>
</dbReference>
<dbReference type="HPA" id="ENSG00000013288">
    <property type="expression patterns" value="Low tissue specificity"/>
</dbReference>
<dbReference type="MalaCards" id="MAN2B2"/>
<dbReference type="MIM" id="618899">
    <property type="type" value="gene"/>
</dbReference>
<dbReference type="neXtProt" id="NX_Q9Y2E5"/>
<dbReference type="OpenTargets" id="ENSG00000013288"/>
<dbReference type="PharmGKB" id="PA128394625"/>
<dbReference type="VEuPathDB" id="HostDB:ENSG00000013288"/>
<dbReference type="eggNOG" id="KOG1959">
    <property type="taxonomic scope" value="Eukaryota"/>
</dbReference>
<dbReference type="GeneTree" id="ENSGT01030000234638"/>
<dbReference type="InParanoid" id="Q9Y2E5"/>
<dbReference type="OMA" id="LWMILGS"/>
<dbReference type="OrthoDB" id="2016903at2759"/>
<dbReference type="PAN-GO" id="Q9Y2E5">
    <property type="GO annotations" value="2 GO annotations based on evolutionary models"/>
</dbReference>
<dbReference type="PhylomeDB" id="Q9Y2E5"/>
<dbReference type="TreeFam" id="TF332447"/>
<dbReference type="PathwayCommons" id="Q9Y2E5"/>
<dbReference type="Reactome" id="R-HSA-8853383">
    <property type="pathway name" value="Lysosomal oligosaccharide catabolism"/>
</dbReference>
<dbReference type="SignaLink" id="Q9Y2E5"/>
<dbReference type="BioGRID-ORCS" id="23324">
    <property type="hits" value="11 hits in 1157 CRISPR screens"/>
</dbReference>
<dbReference type="ChiTaRS" id="MAN2B2">
    <property type="organism name" value="human"/>
</dbReference>
<dbReference type="GeneWiki" id="MAN2B2"/>
<dbReference type="GenomeRNAi" id="23324"/>
<dbReference type="Pharos" id="Q9Y2E5">
    <property type="development level" value="Tbio"/>
</dbReference>
<dbReference type="PRO" id="PR:Q9Y2E5"/>
<dbReference type="Proteomes" id="UP000005640">
    <property type="component" value="Chromosome 4"/>
</dbReference>
<dbReference type="RNAct" id="Q9Y2E5">
    <property type="molecule type" value="protein"/>
</dbReference>
<dbReference type="Bgee" id="ENSG00000013288">
    <property type="expression patterns" value="Expressed in tendon of biceps brachii and 206 other cell types or tissues"/>
</dbReference>
<dbReference type="ExpressionAtlas" id="Q9Y2E5">
    <property type="expression patterns" value="baseline and differential"/>
</dbReference>
<dbReference type="GO" id="GO:0070062">
    <property type="term" value="C:extracellular exosome"/>
    <property type="evidence" value="ECO:0007005"/>
    <property type="project" value="UniProtKB"/>
</dbReference>
<dbReference type="GO" id="GO:0043202">
    <property type="term" value="C:lysosomal lumen"/>
    <property type="evidence" value="ECO:0000304"/>
    <property type="project" value="Reactome"/>
</dbReference>
<dbReference type="GO" id="GO:0005764">
    <property type="term" value="C:lysosome"/>
    <property type="evidence" value="ECO:0000318"/>
    <property type="project" value="GO_Central"/>
</dbReference>
<dbReference type="GO" id="GO:0004559">
    <property type="term" value="F:alpha-mannosidase activity"/>
    <property type="evidence" value="ECO:0000318"/>
    <property type="project" value="GO_Central"/>
</dbReference>
<dbReference type="GO" id="GO:0030246">
    <property type="term" value="F:carbohydrate binding"/>
    <property type="evidence" value="ECO:0007669"/>
    <property type="project" value="InterPro"/>
</dbReference>
<dbReference type="GO" id="GO:0046872">
    <property type="term" value="F:metal ion binding"/>
    <property type="evidence" value="ECO:0007669"/>
    <property type="project" value="UniProtKB-KW"/>
</dbReference>
<dbReference type="GO" id="GO:0006013">
    <property type="term" value="P:mannose metabolic process"/>
    <property type="evidence" value="ECO:0007669"/>
    <property type="project" value="Ensembl"/>
</dbReference>
<dbReference type="GO" id="GO:0009313">
    <property type="term" value="P:oligosaccharide catabolic process"/>
    <property type="evidence" value="ECO:0007669"/>
    <property type="project" value="Ensembl"/>
</dbReference>
<dbReference type="CDD" id="cd10811">
    <property type="entry name" value="GH38N_AMII_Epman_like"/>
    <property type="match status" value="1"/>
</dbReference>
<dbReference type="FunFam" id="1.20.1270.50:FF:000005">
    <property type="entry name" value="Alpha-mannosidase"/>
    <property type="match status" value="1"/>
</dbReference>
<dbReference type="FunFam" id="2.60.40.1180:FF:000029">
    <property type="entry name" value="Alpha-mannosidase"/>
    <property type="match status" value="1"/>
</dbReference>
<dbReference type="FunFam" id="2.60.40.1360:FF:000003">
    <property type="entry name" value="Alpha-mannosidase"/>
    <property type="match status" value="1"/>
</dbReference>
<dbReference type="FunFam" id="2.70.98.30:FF:000005">
    <property type="entry name" value="Alpha-mannosidase"/>
    <property type="match status" value="1"/>
</dbReference>
<dbReference type="FunFam" id="3.20.110.10:FF:000004">
    <property type="entry name" value="Alpha-mannosidase"/>
    <property type="match status" value="1"/>
</dbReference>
<dbReference type="Gene3D" id="2.60.40.1360">
    <property type="match status" value="1"/>
</dbReference>
<dbReference type="Gene3D" id="3.20.110.10">
    <property type="entry name" value="Glycoside hydrolase 38, N terminal domain"/>
    <property type="match status" value="1"/>
</dbReference>
<dbReference type="Gene3D" id="1.20.1270.50">
    <property type="entry name" value="Glycoside hydrolase family 38, central domain"/>
    <property type="match status" value="1"/>
</dbReference>
<dbReference type="Gene3D" id="2.60.40.1180">
    <property type="entry name" value="Golgi alpha-mannosidase II"/>
    <property type="match status" value="1"/>
</dbReference>
<dbReference type="Gene3D" id="2.70.98.30">
    <property type="entry name" value="Golgi alpha-mannosidase II, domain 4"/>
    <property type="match status" value="1"/>
</dbReference>
<dbReference type="InterPro" id="IPR011013">
    <property type="entry name" value="Gal_mutarotase_sf_dom"/>
</dbReference>
<dbReference type="InterPro" id="IPR011330">
    <property type="entry name" value="Glyco_hydro/deAcase_b/a-brl"/>
</dbReference>
<dbReference type="InterPro" id="IPR011682">
    <property type="entry name" value="Glyco_hydro_38_C"/>
</dbReference>
<dbReference type="InterPro" id="IPR015341">
    <property type="entry name" value="Glyco_hydro_38_cen"/>
</dbReference>
<dbReference type="InterPro" id="IPR037094">
    <property type="entry name" value="Glyco_hydro_38_cen_sf"/>
</dbReference>
<dbReference type="InterPro" id="IPR000602">
    <property type="entry name" value="Glyco_hydro_38_N"/>
</dbReference>
<dbReference type="InterPro" id="IPR027291">
    <property type="entry name" value="Glyco_hydro_38_N_sf"/>
</dbReference>
<dbReference type="InterPro" id="IPR028995">
    <property type="entry name" value="Glyco_hydro_57/38_cen_sf"/>
</dbReference>
<dbReference type="InterPro" id="IPR013780">
    <property type="entry name" value="Glyco_hydro_b"/>
</dbReference>
<dbReference type="InterPro" id="IPR050843">
    <property type="entry name" value="Glycosyl_Hydrlase_38"/>
</dbReference>
<dbReference type="PANTHER" id="PTHR11607">
    <property type="entry name" value="ALPHA-MANNOSIDASE"/>
    <property type="match status" value="1"/>
</dbReference>
<dbReference type="PANTHER" id="PTHR11607:SF28">
    <property type="entry name" value="EPIDIDYMIS-SPECIFIC ALPHA-MANNOSIDASE"/>
    <property type="match status" value="1"/>
</dbReference>
<dbReference type="Pfam" id="PF09261">
    <property type="entry name" value="Alpha-mann_mid"/>
    <property type="match status" value="1"/>
</dbReference>
<dbReference type="Pfam" id="PF07748">
    <property type="entry name" value="Glyco_hydro_38C"/>
    <property type="match status" value="1"/>
</dbReference>
<dbReference type="Pfam" id="PF01074">
    <property type="entry name" value="Glyco_hydro_38N"/>
    <property type="match status" value="1"/>
</dbReference>
<dbReference type="SMART" id="SM00872">
    <property type="entry name" value="Alpha-mann_mid"/>
    <property type="match status" value="1"/>
</dbReference>
<dbReference type="SUPFAM" id="SSF88688">
    <property type="entry name" value="Families 57/38 glycoside transferase middle domain"/>
    <property type="match status" value="1"/>
</dbReference>
<dbReference type="SUPFAM" id="SSF74650">
    <property type="entry name" value="Galactose mutarotase-like"/>
    <property type="match status" value="1"/>
</dbReference>
<dbReference type="SUPFAM" id="SSF88713">
    <property type="entry name" value="Glycoside hydrolase/deacetylase"/>
    <property type="match status" value="1"/>
</dbReference>
<sequence>MGQLCWLPLLAPLLLLRPPGVQSAGPIRAFVVPHSHMDVGWVYTVQESMRAYAANVYTSVVEELARGQQRRFIAVEQEFFRLWWDGVASDQQKYQVRQLLEEGRLEFVIGGQVMHDEAVTHLDDQILQLTEGHGFLYETFGIRPQFSWHVDPFGASATTPTLFALAGFNAHLGSRIDYDLKAAMQEARGLQFVWRGSPSLSERQEIFTHIMDQYSYCTPSHIPFSNRSGFYWNGVAVFPKPPQDGVYPNMSEPVTPANINLYAEALVANVKQRAAWFRTPHVLWPWGCDKQFFNASVQFANMDPLLDHINSHAAELGVSVQYATLGDYFRALHALNVTWRVRDHHDFLPYSTEPFQAWTGFYTSRSSLKGLARRASALLYAGESMFTRYLWPAPRGHLDPTWALQQLQQLRWAVSEVQHHDAITGTESPKVRDMYATHLASGMLGMRKLMASIVLDELQPQAPMAASSDAGPAGHFASVYNPLAWTVTTIVTLTVGFPGVRVTDEAGHPVPSQIQNSTETPSAYDLLILTTIPGLSYRHYNIRPTAGAQEGTQEPAATVASTLQFGRRLRRRTSHAGRYLVPVANDCYIVLLDQDTNLMHSIWERQSNRTVRVTQEFLEYHVNGDVKQGPISDNYLFTPGKAAVPAWEAVEMEIVAGQLVTEIRQYFYRNMTAQNYTYAIRSRLTHVPQGHDGELLCHRIEQEYQAGPLELNREAVLRTSTNLNSQQVIYSDNNGYQMQRRPYVSYVNNSIARNYYPMVQSAFMEDGKSRLVLLSERAHGISSQGNGQVEVMLHRRLWNNFDWDLGYNLTLNDTSVVHPVLWLLLGSWSLTTALRQRSALALQHRPVVLFGDLAGTAPKLPGPQQQEAVTLPPNLHLQILSIPGWRYSSNHTEHSQNLRKGHRGEAQADLRRVLLRLYHLYEVGEDPVLSQPVTVNLEAVLQALGSVVAVEERSLTGTWDLSMLHRWSWRTGPGRHRGDTTSPSRPPGGPIITVHPKEIRTFFIHFQQQ</sequence>
<accession>Q9Y2E5</accession>
<accession>Q66MP2</accession>
<accession>Q86T67</accession>
<feature type="signal peptide" evidence="2">
    <location>
        <begin position="1"/>
        <end position="23"/>
    </location>
</feature>
<feature type="chain" id="PRO_0000012077" description="Epididymis-specific alpha-mannosidase">
    <location>
        <begin position="24"/>
        <end position="1009"/>
    </location>
</feature>
<feature type="region of interest" description="Disordered" evidence="3">
    <location>
        <begin position="972"/>
        <end position="991"/>
    </location>
</feature>
<feature type="active site" description="Nucleophile" evidence="1">
    <location>
        <position position="151"/>
    </location>
</feature>
<feature type="binding site" evidence="1">
    <location>
        <position position="36"/>
    </location>
    <ligand>
        <name>Zn(2+)</name>
        <dbReference type="ChEBI" id="CHEBI:29105"/>
    </ligand>
</feature>
<feature type="binding site" evidence="1">
    <location>
        <position position="38"/>
    </location>
    <ligand>
        <name>Zn(2+)</name>
        <dbReference type="ChEBI" id="CHEBI:29105"/>
    </ligand>
</feature>
<feature type="binding site" evidence="1">
    <location>
        <position position="151"/>
    </location>
    <ligand>
        <name>Zn(2+)</name>
        <dbReference type="ChEBI" id="CHEBI:29105"/>
    </ligand>
</feature>
<feature type="binding site" evidence="1">
    <location>
        <position position="420"/>
    </location>
    <ligand>
        <name>Zn(2+)</name>
        <dbReference type="ChEBI" id="CHEBI:29105"/>
    </ligand>
</feature>
<feature type="glycosylation site" description="N-linked (GlcNAc...) asparagine" evidence="2">
    <location>
        <position position="226"/>
    </location>
</feature>
<feature type="glycosylation site" description="N-linked (GlcNAc...) asparagine" evidence="2">
    <location>
        <position position="249"/>
    </location>
</feature>
<feature type="glycosylation site" description="N-linked (GlcNAc...) asparagine" evidence="2">
    <location>
        <position position="294"/>
    </location>
</feature>
<feature type="glycosylation site" description="N-linked (GlcNAc...) asparagine" evidence="2">
    <location>
        <position position="336"/>
    </location>
</feature>
<feature type="glycosylation site" description="N-linked (GlcNAc...) asparagine" evidence="7">
    <location>
        <position position="516"/>
    </location>
</feature>
<feature type="glycosylation site" description="N-linked (GlcNAc...) asparagine" evidence="2">
    <location>
        <position position="608"/>
    </location>
</feature>
<feature type="glycosylation site" description="N-linked (GlcNAc...) asparagine" evidence="2">
    <location>
        <position position="670"/>
    </location>
</feature>
<feature type="glycosylation site" description="N-linked (GlcNAc...) asparagine" evidence="2">
    <location>
        <position position="675"/>
    </location>
</feature>
<feature type="glycosylation site" description="N-linked (GlcNAc...) asparagine" evidence="2">
    <location>
        <position position="748"/>
    </location>
</feature>
<feature type="glycosylation site" description="N-linked (GlcNAc...) asparagine" evidence="2">
    <location>
        <position position="808"/>
    </location>
</feature>
<feature type="glycosylation site" description="N-linked (GlcNAc...) asparagine" evidence="2">
    <location>
        <position position="812"/>
    </location>
</feature>
<feature type="glycosylation site" description="N-linked (GlcNAc...) asparagine" evidence="2">
    <location>
        <position position="890"/>
    </location>
</feature>
<feature type="splice variant" id="VSP_013816" description="In isoform 2." evidence="8">
    <original>AVLQALGSVVAVEERSLTGTWDLSMLHRWSWRTGPGRHRGDTTSPSRPPGGPIITVHPKEIRTFFIHFQQQ</original>
    <variation>VNFPTPIQTISQGSKP</variation>
    <location>
        <begin position="939"/>
        <end position="1009"/>
    </location>
</feature>
<feature type="sequence variant" id="VAR_025328" description="In dbSNP:rs2301796." evidence="4 5">
    <original>Q</original>
    <variation>P</variation>
    <location>
        <position position="243"/>
    </location>
</feature>
<feature type="sequence variant" id="VAR_025329" description="In dbSNP:rs2301795." evidence="6">
    <original>V</original>
    <variation>M</variation>
    <location>
        <position position="320"/>
    </location>
</feature>
<feature type="sequence variant" id="VAR_055840" description="In dbSNP:rs6858328.">
    <original>R</original>
    <variation>C</variation>
    <location>
        <position position="365"/>
    </location>
</feature>
<feature type="sequence variant" id="VAR_025330" description="In dbSNP:rs2301790." evidence="4 5">
    <original>M</original>
    <variation>V</variation>
    <location>
        <position position="446"/>
    </location>
</feature>
<feature type="sequence variant" id="VAR_025331" description="In dbSNP:rs2301788." evidence="4 5">
    <original>N</original>
    <variation>S</variation>
    <location>
        <position position="541"/>
    </location>
</feature>
<feature type="sequence conflict" description="In Ref. 1; CAD89971." evidence="9" ref="1">
    <original>F</original>
    <variation>S</variation>
    <location>
        <position position="79"/>
    </location>
</feature>
<feature type="sequence conflict" description="In Ref. 1; CAD89971." evidence="9" ref="1">
    <original>E</original>
    <variation>Q</variation>
    <location>
        <position position="938"/>
    </location>
</feature>
<name>MA2B2_HUMAN</name>
<gene>
    <name type="primary">MAN2B2</name>
    <name type="synonym">KIAA0935</name>
</gene>
<comment type="catalytic activity">
    <reaction>
        <text>Hydrolysis of terminal, non-reducing alpha-D-mannose residues in alpha-D-mannosides.</text>
        <dbReference type="EC" id="3.2.1.24"/>
    </reaction>
</comment>
<comment type="cofactor">
    <cofactor evidence="1">
        <name>Zn(2+)</name>
        <dbReference type="ChEBI" id="CHEBI:29105"/>
    </cofactor>
    <text evidence="1">Binds 1 zinc ion per subunit.</text>
</comment>
<comment type="interaction">
    <interactant intactId="EBI-12243024">
        <id>Q9Y2E5</id>
    </interactant>
    <interactant intactId="EBI-743771">
        <id>Q92624</id>
        <label>APPBP2</label>
    </interactant>
    <organismsDiffer>false</organismsDiffer>
    <experiments>3</experiments>
</comment>
<comment type="interaction">
    <interactant intactId="EBI-12243024">
        <id>Q9Y2E5</id>
    </interactant>
    <interactant intactId="EBI-1045797">
        <id>Q8N5K1</id>
        <label>CISD2</label>
    </interactant>
    <organismsDiffer>false</organismsDiffer>
    <experiments>3</experiments>
</comment>
<comment type="interaction">
    <interactant intactId="EBI-12243024">
        <id>Q9Y2E5</id>
    </interactant>
    <interactant intactId="EBI-18013275">
        <id>Q7Z7G2</id>
        <label>CPLX4</label>
    </interactant>
    <organismsDiffer>false</organismsDiffer>
    <experiments>3</experiments>
</comment>
<comment type="interaction">
    <interactant intactId="EBI-12243024">
        <id>Q9Y2E5</id>
    </interactant>
    <interactant intactId="EBI-6942903">
        <id>Q96BA8</id>
        <label>CREB3L1</label>
    </interactant>
    <organismsDiffer>false</organismsDiffer>
    <experiments>3</experiments>
</comment>
<comment type="interaction">
    <interactant intactId="EBI-12243024">
        <id>Q9Y2E5</id>
    </interactant>
    <interactant intactId="EBI-3918971">
        <id>Q9Y680</id>
        <label>FKBP7</label>
    </interactant>
    <organismsDiffer>false</organismsDiffer>
    <experiments>3</experiments>
</comment>
<comment type="interaction">
    <interactant intactId="EBI-12243024">
        <id>Q9Y2E5</id>
    </interactant>
    <interactant intactId="EBI-11721746">
        <id>Q8TED1</id>
        <label>GPX8</label>
    </interactant>
    <organismsDiffer>false</organismsDiffer>
    <experiments>3</experiments>
</comment>
<comment type="interaction">
    <interactant intactId="EBI-12243024">
        <id>Q9Y2E5</id>
    </interactant>
    <interactant intactId="EBI-3934936">
        <id>O95279</id>
        <label>KCNK5</label>
    </interactant>
    <organismsDiffer>false</organismsDiffer>
    <experiments>3</experiments>
</comment>
<comment type="interaction">
    <interactant intactId="EBI-12243024">
        <id>Q9Y2E5</id>
    </interactant>
    <interactant intactId="EBI-751260">
        <id>Q9BYR7</id>
        <label>KRTAP3-2</label>
    </interactant>
    <organismsDiffer>false</organismsDiffer>
    <experiments>3</experiments>
</comment>
<comment type="interaction">
    <interactant intactId="EBI-12243024">
        <id>Q9Y2E5</id>
    </interactant>
    <interactant intactId="EBI-2830566">
        <id>Q9H400</id>
        <label>LIME1</label>
    </interactant>
    <organismsDiffer>false</organismsDiffer>
    <experiments>3</experiments>
</comment>
<comment type="subcellular location">
    <subcellularLocation>
        <location evidence="9">Secreted</location>
    </subcellularLocation>
</comment>
<comment type="alternative products">
    <event type="alternative splicing"/>
    <isoform>
        <id>Q9Y2E5-1</id>
        <name>1</name>
        <sequence type="displayed"/>
    </isoform>
    <isoform>
        <id>Q9Y2E5-2</id>
        <name>2</name>
        <sequence type="described" ref="VSP_013816"/>
    </isoform>
</comment>
<comment type="similarity">
    <text evidence="9">Belongs to the glycosyl hydrolase 38 family.</text>
</comment>
<protein>
    <recommendedName>
        <fullName>Epididymis-specific alpha-mannosidase</fullName>
        <ecNumber>3.2.1.24</ecNumber>
    </recommendedName>
    <alternativeName>
        <fullName>Alpha-1,6-mannosidase</fullName>
    </alternativeName>
    <alternativeName>
        <fullName>Mannosidase alpha class 2B member 2</fullName>
    </alternativeName>
</protein>